<reference key="1">
    <citation type="journal article" date="2008" name="PLoS Genet.">
        <title>Complete genome sequence of the N2-fixing broad host range endophyte Klebsiella pneumoniae 342 and virulence predictions verified in mice.</title>
        <authorList>
            <person name="Fouts D.E."/>
            <person name="Tyler H.L."/>
            <person name="DeBoy R.T."/>
            <person name="Daugherty S."/>
            <person name="Ren Q."/>
            <person name="Badger J.H."/>
            <person name="Durkin A.S."/>
            <person name="Huot H."/>
            <person name="Shrivastava S."/>
            <person name="Kothari S."/>
            <person name="Dodson R.J."/>
            <person name="Mohamoud Y."/>
            <person name="Khouri H."/>
            <person name="Roesch L.F.W."/>
            <person name="Krogfelt K.A."/>
            <person name="Struve C."/>
            <person name="Triplett E.W."/>
            <person name="Methe B.A."/>
        </authorList>
    </citation>
    <scope>NUCLEOTIDE SEQUENCE [LARGE SCALE GENOMIC DNA]</scope>
    <source>
        <strain>342</strain>
    </source>
</reference>
<feature type="chain" id="PRO_1000130554" description="L-threonine 3-dehydrogenase">
    <location>
        <begin position="1"/>
        <end position="341"/>
    </location>
</feature>
<feature type="active site" description="Charge relay system" evidence="1">
    <location>
        <position position="40"/>
    </location>
</feature>
<feature type="active site" description="Charge relay system" evidence="1">
    <location>
        <position position="43"/>
    </location>
</feature>
<feature type="binding site" evidence="1">
    <location>
        <position position="38"/>
    </location>
    <ligand>
        <name>Zn(2+)</name>
        <dbReference type="ChEBI" id="CHEBI:29105"/>
        <label>1</label>
        <note>catalytic</note>
    </ligand>
</feature>
<feature type="binding site" evidence="1">
    <location>
        <position position="63"/>
    </location>
    <ligand>
        <name>Zn(2+)</name>
        <dbReference type="ChEBI" id="CHEBI:29105"/>
        <label>1</label>
        <note>catalytic</note>
    </ligand>
</feature>
<feature type="binding site" evidence="1">
    <location>
        <position position="64"/>
    </location>
    <ligand>
        <name>Zn(2+)</name>
        <dbReference type="ChEBI" id="CHEBI:29105"/>
        <label>1</label>
        <note>catalytic</note>
    </ligand>
</feature>
<feature type="binding site" evidence="1">
    <location>
        <position position="93"/>
    </location>
    <ligand>
        <name>Zn(2+)</name>
        <dbReference type="ChEBI" id="CHEBI:29105"/>
        <label>2</label>
    </ligand>
</feature>
<feature type="binding site" evidence="1">
    <location>
        <position position="96"/>
    </location>
    <ligand>
        <name>Zn(2+)</name>
        <dbReference type="ChEBI" id="CHEBI:29105"/>
        <label>2</label>
    </ligand>
</feature>
<feature type="binding site" evidence="1">
    <location>
        <position position="99"/>
    </location>
    <ligand>
        <name>Zn(2+)</name>
        <dbReference type="ChEBI" id="CHEBI:29105"/>
        <label>2</label>
    </ligand>
</feature>
<feature type="binding site" evidence="1">
    <location>
        <position position="107"/>
    </location>
    <ligand>
        <name>Zn(2+)</name>
        <dbReference type="ChEBI" id="CHEBI:29105"/>
        <label>2</label>
    </ligand>
</feature>
<feature type="binding site" evidence="1">
    <location>
        <position position="175"/>
    </location>
    <ligand>
        <name>NAD(+)</name>
        <dbReference type="ChEBI" id="CHEBI:57540"/>
    </ligand>
</feature>
<feature type="binding site" evidence="1">
    <location>
        <position position="195"/>
    </location>
    <ligand>
        <name>NAD(+)</name>
        <dbReference type="ChEBI" id="CHEBI:57540"/>
    </ligand>
</feature>
<feature type="binding site" evidence="1">
    <location>
        <position position="200"/>
    </location>
    <ligand>
        <name>NAD(+)</name>
        <dbReference type="ChEBI" id="CHEBI:57540"/>
    </ligand>
</feature>
<feature type="binding site" evidence="1">
    <location>
        <begin position="262"/>
        <end position="264"/>
    </location>
    <ligand>
        <name>NAD(+)</name>
        <dbReference type="ChEBI" id="CHEBI:57540"/>
    </ligand>
</feature>
<feature type="binding site" evidence="1">
    <location>
        <begin position="286"/>
        <end position="287"/>
    </location>
    <ligand>
        <name>NAD(+)</name>
        <dbReference type="ChEBI" id="CHEBI:57540"/>
    </ligand>
</feature>
<feature type="site" description="Important for catalytic activity for the proton relay mechanism but does not participate directly in the coordination of zinc atom" evidence="1">
    <location>
        <position position="148"/>
    </location>
</feature>
<accession>B5XTI4</accession>
<dbReference type="EC" id="1.1.1.103" evidence="1"/>
<dbReference type="EMBL" id="CP000964">
    <property type="protein sequence ID" value="ACI10459.1"/>
    <property type="molecule type" value="Genomic_DNA"/>
</dbReference>
<dbReference type="SMR" id="B5XTI4"/>
<dbReference type="KEGG" id="kpe:KPK_0135"/>
<dbReference type="HOGENOM" id="CLU_026673_11_0_6"/>
<dbReference type="UniPathway" id="UPA00046">
    <property type="reaction ID" value="UER00505"/>
</dbReference>
<dbReference type="Proteomes" id="UP000001734">
    <property type="component" value="Chromosome"/>
</dbReference>
<dbReference type="GO" id="GO:0005737">
    <property type="term" value="C:cytoplasm"/>
    <property type="evidence" value="ECO:0007669"/>
    <property type="project" value="UniProtKB-SubCell"/>
</dbReference>
<dbReference type="GO" id="GO:0008743">
    <property type="term" value="F:L-threonine 3-dehydrogenase activity"/>
    <property type="evidence" value="ECO:0007669"/>
    <property type="project" value="UniProtKB-UniRule"/>
</dbReference>
<dbReference type="GO" id="GO:0008270">
    <property type="term" value="F:zinc ion binding"/>
    <property type="evidence" value="ECO:0007669"/>
    <property type="project" value="UniProtKB-UniRule"/>
</dbReference>
<dbReference type="GO" id="GO:0019518">
    <property type="term" value="P:L-threonine catabolic process to glycine"/>
    <property type="evidence" value="ECO:0007669"/>
    <property type="project" value="UniProtKB-UniPathway"/>
</dbReference>
<dbReference type="FunFam" id="3.40.50.720:FF:000059">
    <property type="entry name" value="L-threonine 3-dehydrogenase"/>
    <property type="match status" value="1"/>
</dbReference>
<dbReference type="Gene3D" id="3.90.180.10">
    <property type="entry name" value="Medium-chain alcohol dehydrogenases, catalytic domain"/>
    <property type="match status" value="1"/>
</dbReference>
<dbReference type="Gene3D" id="3.40.50.720">
    <property type="entry name" value="NAD(P)-binding Rossmann-like Domain"/>
    <property type="match status" value="1"/>
</dbReference>
<dbReference type="HAMAP" id="MF_00627">
    <property type="entry name" value="Thr_dehydrog"/>
    <property type="match status" value="1"/>
</dbReference>
<dbReference type="InterPro" id="IPR013149">
    <property type="entry name" value="ADH-like_C"/>
</dbReference>
<dbReference type="InterPro" id="IPR013154">
    <property type="entry name" value="ADH-like_N"/>
</dbReference>
<dbReference type="InterPro" id="IPR002328">
    <property type="entry name" value="ADH_Zn_CS"/>
</dbReference>
<dbReference type="InterPro" id="IPR011032">
    <property type="entry name" value="GroES-like_sf"/>
</dbReference>
<dbReference type="InterPro" id="IPR004627">
    <property type="entry name" value="L-Threonine_3-DHase"/>
</dbReference>
<dbReference type="InterPro" id="IPR036291">
    <property type="entry name" value="NAD(P)-bd_dom_sf"/>
</dbReference>
<dbReference type="InterPro" id="IPR020843">
    <property type="entry name" value="PKS_ER"/>
</dbReference>
<dbReference type="InterPro" id="IPR050129">
    <property type="entry name" value="Zn_alcohol_dh"/>
</dbReference>
<dbReference type="NCBIfam" id="NF003808">
    <property type="entry name" value="PRK05396.1"/>
    <property type="match status" value="1"/>
</dbReference>
<dbReference type="NCBIfam" id="TIGR00692">
    <property type="entry name" value="tdh"/>
    <property type="match status" value="1"/>
</dbReference>
<dbReference type="PANTHER" id="PTHR43401">
    <property type="entry name" value="L-THREONINE 3-DEHYDROGENASE"/>
    <property type="match status" value="1"/>
</dbReference>
<dbReference type="PANTHER" id="PTHR43401:SF2">
    <property type="entry name" value="L-THREONINE 3-DEHYDROGENASE"/>
    <property type="match status" value="1"/>
</dbReference>
<dbReference type="Pfam" id="PF08240">
    <property type="entry name" value="ADH_N"/>
    <property type="match status" value="1"/>
</dbReference>
<dbReference type="Pfam" id="PF00107">
    <property type="entry name" value="ADH_zinc_N"/>
    <property type="match status" value="1"/>
</dbReference>
<dbReference type="SMART" id="SM00829">
    <property type="entry name" value="PKS_ER"/>
    <property type="match status" value="1"/>
</dbReference>
<dbReference type="SUPFAM" id="SSF50129">
    <property type="entry name" value="GroES-like"/>
    <property type="match status" value="1"/>
</dbReference>
<dbReference type="SUPFAM" id="SSF51735">
    <property type="entry name" value="NAD(P)-binding Rossmann-fold domains"/>
    <property type="match status" value="1"/>
</dbReference>
<dbReference type="PROSITE" id="PS00059">
    <property type="entry name" value="ADH_ZINC"/>
    <property type="match status" value="1"/>
</dbReference>
<organism>
    <name type="scientific">Klebsiella pneumoniae (strain 342)</name>
    <dbReference type="NCBI Taxonomy" id="507522"/>
    <lineage>
        <taxon>Bacteria</taxon>
        <taxon>Pseudomonadati</taxon>
        <taxon>Pseudomonadota</taxon>
        <taxon>Gammaproteobacteria</taxon>
        <taxon>Enterobacterales</taxon>
        <taxon>Enterobacteriaceae</taxon>
        <taxon>Klebsiella/Raoultella group</taxon>
        <taxon>Klebsiella</taxon>
        <taxon>Klebsiella pneumoniae complex</taxon>
    </lineage>
</organism>
<sequence length="341" mass="37241">MKALSKLKAEEGIWMTDVPEPEVGHNDLLIKIRKTAICGTDVHIYNWDEWSQKTIPVPMVVGHEYVGEVVGIGQEVRGFKIGDRVSGEGHITCGHCRNCRAGRTHLCRNTIGVGVNRPGCFAEYLVIPAFNAFKIPDNISDDLASIFDPFGNAVHTALSFDLVGEDVLVSGAGPIGVMAAAVAKHVGARNVVITDVNEYRLELARKMGVTRAVNVAKENLNDVMAELGMTEGFDVGLEMSGAPPAFRSMLDTMNHGGRIAMLGIPPSDMSIDWTKVIFKGLFIKGIYGREMFETWYKMAALIQSGLDLSPIITHRFGIDDFQKGFDAMRSGQSGKVVLSWE</sequence>
<evidence type="ECO:0000255" key="1">
    <source>
        <dbReference type="HAMAP-Rule" id="MF_00627"/>
    </source>
</evidence>
<keyword id="KW-0963">Cytoplasm</keyword>
<keyword id="KW-0479">Metal-binding</keyword>
<keyword id="KW-0520">NAD</keyword>
<keyword id="KW-0560">Oxidoreductase</keyword>
<keyword id="KW-0862">Zinc</keyword>
<name>TDH_KLEP3</name>
<gene>
    <name evidence="1" type="primary">tdh</name>
    <name type="ordered locus">KPK_0135</name>
</gene>
<comment type="function">
    <text evidence="1">Catalyzes the NAD(+)-dependent oxidation of L-threonine to 2-amino-3-ketobutyrate.</text>
</comment>
<comment type="catalytic activity">
    <reaction evidence="1">
        <text>L-threonine + NAD(+) = (2S)-2-amino-3-oxobutanoate + NADH + H(+)</text>
        <dbReference type="Rhea" id="RHEA:13161"/>
        <dbReference type="ChEBI" id="CHEBI:15378"/>
        <dbReference type="ChEBI" id="CHEBI:57540"/>
        <dbReference type="ChEBI" id="CHEBI:57926"/>
        <dbReference type="ChEBI" id="CHEBI:57945"/>
        <dbReference type="ChEBI" id="CHEBI:78948"/>
        <dbReference type="EC" id="1.1.1.103"/>
    </reaction>
</comment>
<comment type="cofactor">
    <cofactor evidence="1">
        <name>Zn(2+)</name>
        <dbReference type="ChEBI" id="CHEBI:29105"/>
    </cofactor>
    <text evidence="1">Binds 2 Zn(2+) ions per subunit.</text>
</comment>
<comment type="pathway">
    <text evidence="1">Amino-acid degradation; L-threonine degradation via oxydo-reductase pathway; glycine from L-threonine: step 1/2.</text>
</comment>
<comment type="subunit">
    <text evidence="1">Homotetramer.</text>
</comment>
<comment type="subcellular location">
    <subcellularLocation>
        <location evidence="1">Cytoplasm</location>
    </subcellularLocation>
</comment>
<comment type="similarity">
    <text evidence="1">Belongs to the zinc-containing alcohol dehydrogenase family.</text>
</comment>
<protein>
    <recommendedName>
        <fullName evidence="1">L-threonine 3-dehydrogenase</fullName>
        <shortName evidence="1">TDH</shortName>
        <ecNumber evidence="1">1.1.1.103</ecNumber>
    </recommendedName>
</protein>
<proteinExistence type="inferred from homology"/>